<evidence type="ECO:0000255" key="1">
    <source>
        <dbReference type="HAMAP-Rule" id="MF_00581"/>
    </source>
</evidence>
<feature type="chain" id="PRO_1000025415" description="Argininosuccinate synthase">
    <location>
        <begin position="1"/>
        <end position="446"/>
    </location>
</feature>
<feature type="binding site" evidence="1">
    <location>
        <begin position="17"/>
        <end position="25"/>
    </location>
    <ligand>
        <name>ATP</name>
        <dbReference type="ChEBI" id="CHEBI:30616"/>
    </ligand>
</feature>
<feature type="binding site" evidence="1">
    <location>
        <position position="43"/>
    </location>
    <ligand>
        <name>ATP</name>
        <dbReference type="ChEBI" id="CHEBI:30616"/>
    </ligand>
</feature>
<feature type="binding site" evidence="1">
    <location>
        <position position="99"/>
    </location>
    <ligand>
        <name>L-citrulline</name>
        <dbReference type="ChEBI" id="CHEBI:57743"/>
    </ligand>
</feature>
<feature type="binding site" evidence="1">
    <location>
        <position position="129"/>
    </location>
    <ligand>
        <name>ATP</name>
        <dbReference type="ChEBI" id="CHEBI:30616"/>
    </ligand>
</feature>
<feature type="binding site" evidence="1">
    <location>
        <position position="131"/>
    </location>
    <ligand>
        <name>ATP</name>
        <dbReference type="ChEBI" id="CHEBI:30616"/>
    </ligand>
</feature>
<feature type="binding site" evidence="1">
    <location>
        <position position="131"/>
    </location>
    <ligand>
        <name>L-aspartate</name>
        <dbReference type="ChEBI" id="CHEBI:29991"/>
    </ligand>
</feature>
<feature type="binding site" evidence="1">
    <location>
        <position position="135"/>
    </location>
    <ligand>
        <name>L-aspartate</name>
        <dbReference type="ChEBI" id="CHEBI:29991"/>
    </ligand>
</feature>
<feature type="binding site" evidence="1">
    <location>
        <position position="135"/>
    </location>
    <ligand>
        <name>L-citrulline</name>
        <dbReference type="ChEBI" id="CHEBI:57743"/>
    </ligand>
</feature>
<feature type="binding site" evidence="1">
    <location>
        <position position="136"/>
    </location>
    <ligand>
        <name>ATP</name>
        <dbReference type="ChEBI" id="CHEBI:30616"/>
    </ligand>
</feature>
<feature type="binding site" evidence="1">
    <location>
        <position position="136"/>
    </location>
    <ligand>
        <name>L-aspartate</name>
        <dbReference type="ChEBI" id="CHEBI:29991"/>
    </ligand>
</feature>
<feature type="binding site" evidence="1">
    <location>
        <position position="139"/>
    </location>
    <ligand>
        <name>L-citrulline</name>
        <dbReference type="ChEBI" id="CHEBI:57743"/>
    </ligand>
</feature>
<feature type="binding site" evidence="1">
    <location>
        <position position="192"/>
    </location>
    <ligand>
        <name>L-citrulline</name>
        <dbReference type="ChEBI" id="CHEBI:57743"/>
    </ligand>
</feature>
<feature type="binding site" evidence="1">
    <location>
        <position position="194"/>
    </location>
    <ligand>
        <name>ATP</name>
        <dbReference type="ChEBI" id="CHEBI:30616"/>
    </ligand>
</feature>
<feature type="binding site" evidence="1">
    <location>
        <position position="201"/>
    </location>
    <ligand>
        <name>L-citrulline</name>
        <dbReference type="ChEBI" id="CHEBI:57743"/>
    </ligand>
</feature>
<feature type="binding site" evidence="1">
    <location>
        <position position="203"/>
    </location>
    <ligand>
        <name>L-citrulline</name>
        <dbReference type="ChEBI" id="CHEBI:57743"/>
    </ligand>
</feature>
<feature type="binding site" evidence="1">
    <location>
        <position position="280"/>
    </location>
    <ligand>
        <name>L-citrulline</name>
        <dbReference type="ChEBI" id="CHEBI:57743"/>
    </ligand>
</feature>
<name>ASSY_BURP0</name>
<accession>A3NQI1</accession>
<gene>
    <name evidence="1" type="primary">argG</name>
    <name type="ordered locus">BURPS1106A_0319</name>
</gene>
<organism>
    <name type="scientific">Burkholderia pseudomallei (strain 1106a)</name>
    <dbReference type="NCBI Taxonomy" id="357348"/>
    <lineage>
        <taxon>Bacteria</taxon>
        <taxon>Pseudomonadati</taxon>
        <taxon>Pseudomonadota</taxon>
        <taxon>Betaproteobacteria</taxon>
        <taxon>Burkholderiales</taxon>
        <taxon>Burkholderiaceae</taxon>
        <taxon>Burkholderia</taxon>
        <taxon>pseudomallei group</taxon>
    </lineage>
</organism>
<dbReference type="EC" id="6.3.4.5" evidence="1"/>
<dbReference type="EMBL" id="CP000572">
    <property type="protein sequence ID" value="ABN90423.1"/>
    <property type="molecule type" value="Genomic_DNA"/>
</dbReference>
<dbReference type="RefSeq" id="WP_004189990.1">
    <property type="nucleotide sequence ID" value="NC_009076.1"/>
</dbReference>
<dbReference type="SMR" id="A3NQI1"/>
<dbReference type="GeneID" id="93058813"/>
<dbReference type="KEGG" id="bpl:BURPS1106A_0319"/>
<dbReference type="HOGENOM" id="CLU_032784_4_1_4"/>
<dbReference type="UniPathway" id="UPA00068">
    <property type="reaction ID" value="UER00113"/>
</dbReference>
<dbReference type="Proteomes" id="UP000006738">
    <property type="component" value="Chromosome I"/>
</dbReference>
<dbReference type="GO" id="GO:0005737">
    <property type="term" value="C:cytoplasm"/>
    <property type="evidence" value="ECO:0007669"/>
    <property type="project" value="UniProtKB-SubCell"/>
</dbReference>
<dbReference type="GO" id="GO:0004055">
    <property type="term" value="F:argininosuccinate synthase activity"/>
    <property type="evidence" value="ECO:0007669"/>
    <property type="project" value="UniProtKB-UniRule"/>
</dbReference>
<dbReference type="GO" id="GO:0005524">
    <property type="term" value="F:ATP binding"/>
    <property type="evidence" value="ECO:0007669"/>
    <property type="project" value="UniProtKB-UniRule"/>
</dbReference>
<dbReference type="GO" id="GO:0042803">
    <property type="term" value="F:protein homodimerization activity"/>
    <property type="evidence" value="ECO:0007669"/>
    <property type="project" value="InterPro"/>
</dbReference>
<dbReference type="GO" id="GO:0000053">
    <property type="term" value="P:argininosuccinate metabolic process"/>
    <property type="evidence" value="ECO:0007669"/>
    <property type="project" value="TreeGrafter"/>
</dbReference>
<dbReference type="GO" id="GO:0006526">
    <property type="term" value="P:L-arginine biosynthetic process"/>
    <property type="evidence" value="ECO:0007669"/>
    <property type="project" value="UniProtKB-UniRule"/>
</dbReference>
<dbReference type="GO" id="GO:0000050">
    <property type="term" value="P:urea cycle"/>
    <property type="evidence" value="ECO:0007669"/>
    <property type="project" value="TreeGrafter"/>
</dbReference>
<dbReference type="CDD" id="cd01999">
    <property type="entry name" value="ASS"/>
    <property type="match status" value="1"/>
</dbReference>
<dbReference type="FunFam" id="1.10.287.400:FF:000001">
    <property type="entry name" value="Argininosuccinate synthase"/>
    <property type="match status" value="1"/>
</dbReference>
<dbReference type="Gene3D" id="1.10.287.400">
    <property type="match status" value="1"/>
</dbReference>
<dbReference type="Gene3D" id="3.90.1260.10">
    <property type="entry name" value="Argininosuccinate synthetase, chain A, domain 2"/>
    <property type="match status" value="1"/>
</dbReference>
<dbReference type="Gene3D" id="3.40.50.620">
    <property type="entry name" value="HUPs"/>
    <property type="match status" value="1"/>
</dbReference>
<dbReference type="HAMAP" id="MF_00581">
    <property type="entry name" value="Arg_succ_synth_type2"/>
    <property type="match status" value="1"/>
</dbReference>
<dbReference type="InterPro" id="IPR023437">
    <property type="entry name" value="Arg_succ_synth_type2_subfam"/>
</dbReference>
<dbReference type="InterPro" id="IPR048268">
    <property type="entry name" value="Arginosuc_syn_C"/>
</dbReference>
<dbReference type="InterPro" id="IPR048267">
    <property type="entry name" value="Arginosuc_syn_N"/>
</dbReference>
<dbReference type="InterPro" id="IPR001518">
    <property type="entry name" value="Arginosuc_synth"/>
</dbReference>
<dbReference type="InterPro" id="IPR018223">
    <property type="entry name" value="Arginosuc_synth_CS"/>
</dbReference>
<dbReference type="InterPro" id="IPR023434">
    <property type="entry name" value="Arginosuc_synth_type_1_subfam"/>
</dbReference>
<dbReference type="InterPro" id="IPR024074">
    <property type="entry name" value="AS_cat/multimer_dom_body"/>
</dbReference>
<dbReference type="InterPro" id="IPR024073">
    <property type="entry name" value="AS_multimer_C_tail"/>
</dbReference>
<dbReference type="InterPro" id="IPR014729">
    <property type="entry name" value="Rossmann-like_a/b/a_fold"/>
</dbReference>
<dbReference type="NCBIfam" id="TIGR00032">
    <property type="entry name" value="argG"/>
    <property type="match status" value="1"/>
</dbReference>
<dbReference type="NCBIfam" id="NF003779">
    <property type="entry name" value="PRK05370.1"/>
    <property type="match status" value="1"/>
</dbReference>
<dbReference type="PANTHER" id="PTHR11587">
    <property type="entry name" value="ARGININOSUCCINATE SYNTHASE"/>
    <property type="match status" value="1"/>
</dbReference>
<dbReference type="PANTHER" id="PTHR11587:SF2">
    <property type="entry name" value="ARGININOSUCCINATE SYNTHASE"/>
    <property type="match status" value="1"/>
</dbReference>
<dbReference type="Pfam" id="PF20979">
    <property type="entry name" value="Arginosuc_syn_C"/>
    <property type="match status" value="1"/>
</dbReference>
<dbReference type="Pfam" id="PF00764">
    <property type="entry name" value="Arginosuc_synth"/>
    <property type="match status" value="1"/>
</dbReference>
<dbReference type="SUPFAM" id="SSF52402">
    <property type="entry name" value="Adenine nucleotide alpha hydrolases-like"/>
    <property type="match status" value="1"/>
</dbReference>
<dbReference type="SUPFAM" id="SSF69864">
    <property type="entry name" value="Argininosuccinate synthetase, C-terminal domain"/>
    <property type="match status" value="1"/>
</dbReference>
<dbReference type="PROSITE" id="PS00564">
    <property type="entry name" value="ARGININOSUCCIN_SYN_1"/>
    <property type="match status" value="1"/>
</dbReference>
<dbReference type="PROSITE" id="PS00565">
    <property type="entry name" value="ARGININOSUCCIN_SYN_2"/>
    <property type="match status" value="1"/>
</dbReference>
<reference key="1">
    <citation type="journal article" date="2010" name="Genome Biol. Evol.">
        <title>Continuing evolution of Burkholderia mallei through genome reduction and large-scale rearrangements.</title>
        <authorList>
            <person name="Losada L."/>
            <person name="Ronning C.M."/>
            <person name="DeShazer D."/>
            <person name="Woods D."/>
            <person name="Fedorova N."/>
            <person name="Kim H.S."/>
            <person name="Shabalina S.A."/>
            <person name="Pearson T.R."/>
            <person name="Brinkac L."/>
            <person name="Tan P."/>
            <person name="Nandi T."/>
            <person name="Crabtree J."/>
            <person name="Badger J."/>
            <person name="Beckstrom-Sternberg S."/>
            <person name="Saqib M."/>
            <person name="Schutzer S.E."/>
            <person name="Keim P."/>
            <person name="Nierman W.C."/>
        </authorList>
    </citation>
    <scope>NUCLEOTIDE SEQUENCE [LARGE SCALE GENOMIC DNA]</scope>
    <source>
        <strain>1106a</strain>
    </source>
</reference>
<sequence length="446" mass="49697">MTTILENLPAGQKVGIAFSGGLDTSAALHWMRIKGAVPYAYTANLGQPDEDDYDAIPKRAIQYGAEGARLIDCRAQLVAEGIAALQCGAFHISTAGVTYFNTTPIGRAVTGTMLVAAMKEDGVNIWGDGSTYKGNDIERFYRYGLLVNPDLKIYKPWLDQQFIDELGGRAEMSEFMRQAGFEYKMSAEKAYSTDSNLLGATHEAKDLESLESGIKIVNPIMGVAFWRDDVKIDKEEVTIRFEEGRPVALNGVEYKDAVALLLEANRIGGRHGLGMSDQIENRIIEAKSRGIYEAPGLALLYIAYERLVTGIHNEDTIEQYRENGRRLGRLLYQGRWFDPQAIMLRETAQRWVARAVTGEVTVELRRGNDYSIIGTRSPNLTYQPERLSMEKVQSMFSPRDRIGQLTMRNLDITDTRDKLRIYSQVGLLAAGESSALPKLKEDESGN</sequence>
<comment type="catalytic activity">
    <reaction evidence="1">
        <text>L-citrulline + L-aspartate + ATP = 2-(N(omega)-L-arginino)succinate + AMP + diphosphate + H(+)</text>
        <dbReference type="Rhea" id="RHEA:10932"/>
        <dbReference type="ChEBI" id="CHEBI:15378"/>
        <dbReference type="ChEBI" id="CHEBI:29991"/>
        <dbReference type="ChEBI" id="CHEBI:30616"/>
        <dbReference type="ChEBI" id="CHEBI:33019"/>
        <dbReference type="ChEBI" id="CHEBI:57472"/>
        <dbReference type="ChEBI" id="CHEBI:57743"/>
        <dbReference type="ChEBI" id="CHEBI:456215"/>
        <dbReference type="EC" id="6.3.4.5"/>
    </reaction>
</comment>
<comment type="pathway">
    <text evidence="1">Amino-acid biosynthesis; L-arginine biosynthesis; L-arginine from L-ornithine and carbamoyl phosphate: step 2/3.</text>
</comment>
<comment type="subunit">
    <text evidence="1">Homotetramer.</text>
</comment>
<comment type="subcellular location">
    <subcellularLocation>
        <location evidence="1">Cytoplasm</location>
    </subcellularLocation>
</comment>
<comment type="similarity">
    <text evidence="1">Belongs to the argininosuccinate synthase family. Type 2 subfamily.</text>
</comment>
<proteinExistence type="inferred from homology"/>
<keyword id="KW-0028">Amino-acid biosynthesis</keyword>
<keyword id="KW-0055">Arginine biosynthesis</keyword>
<keyword id="KW-0067">ATP-binding</keyword>
<keyword id="KW-0963">Cytoplasm</keyword>
<keyword id="KW-0436">Ligase</keyword>
<keyword id="KW-0547">Nucleotide-binding</keyword>
<protein>
    <recommendedName>
        <fullName evidence="1">Argininosuccinate synthase</fullName>
        <ecNumber evidence="1">6.3.4.5</ecNumber>
    </recommendedName>
    <alternativeName>
        <fullName evidence="1">Citrulline--aspartate ligase</fullName>
    </alternativeName>
</protein>